<proteinExistence type="evidence at transcript level"/>
<organism>
    <name type="scientific">Rattus norvegicus</name>
    <name type="common">Rat</name>
    <dbReference type="NCBI Taxonomy" id="10116"/>
    <lineage>
        <taxon>Eukaryota</taxon>
        <taxon>Metazoa</taxon>
        <taxon>Chordata</taxon>
        <taxon>Craniata</taxon>
        <taxon>Vertebrata</taxon>
        <taxon>Euteleostomi</taxon>
        <taxon>Mammalia</taxon>
        <taxon>Eutheria</taxon>
        <taxon>Euarchontoglires</taxon>
        <taxon>Glires</taxon>
        <taxon>Rodentia</taxon>
        <taxon>Myomorpha</taxon>
        <taxon>Muroidea</taxon>
        <taxon>Muridae</taxon>
        <taxon>Murinae</taxon>
        <taxon>Rattus</taxon>
    </lineage>
</organism>
<protein>
    <recommendedName>
        <fullName>Transmembrane protease serine 11D</fullName>
        <ecNumber>3.4.21.-</ecNumber>
    </recommendedName>
    <alternativeName>
        <fullName>Adrenal secretory serine protease</fullName>
        <shortName>AsP</shortName>
    </alternativeName>
    <alternativeName>
        <fullName>Airway trypsin-like protease</fullName>
        <shortName>AT</shortName>
    </alternativeName>
    <component>
        <recommendedName>
            <fullName>Transmembrane protease serine 11D non-catalytic chain</fullName>
        </recommendedName>
    </component>
    <component>
        <recommendedName>
            <fullName>Transmembrane protease serine 11D catalytic chain</fullName>
        </recommendedName>
    </component>
</protein>
<name>TM11D_RAT</name>
<gene>
    <name type="primary">Tmprss11d</name>
    <name type="synonym">Rat</name>
</gene>
<comment type="function">
    <text evidence="1 5">May play some biological role in the host defense system on the mucous membrane independently of or in cooperation with other substances in airway mucous or bronchial secretions. Plays a role in the proteolytic processing of ACE2. Preferentially cleaves the C-terminal side of arginine residues at the P1 position of certain peptides (By similarity). Isoform 2 may play a key role in regulating adrenal proliferation by specifically cleaving N-POMC.</text>
</comment>
<comment type="subunit">
    <text evidence="1">Monomer.</text>
</comment>
<comment type="subcellular location">
    <subcellularLocation>
        <location evidence="1">Cell membrane</location>
        <topology evidence="1">Single-pass type II membrane protein</topology>
    </subcellularLocation>
</comment>
<comment type="subcellular location">
    <molecule>Transmembrane protease serine 11D catalytic chain</molecule>
    <subcellularLocation>
        <location evidence="1">Secreted</location>
    </subcellularLocation>
    <text evidence="1">Activated by cleavage and secreted.</text>
</comment>
<comment type="alternative products">
    <event type="alternative splicing"/>
    <isoform>
        <id>Q8VHJ4-1</id>
        <name>1</name>
        <name>RAT1</name>
        <sequence type="displayed"/>
    </isoform>
    <isoform>
        <id>Q8VHJ4-2</id>
        <name>2</name>
        <name>RAT2</name>
        <sequence type="described" ref="VSP_014521 VSP_014522"/>
    </isoform>
</comment>
<comment type="tissue specificity">
    <text evidence="5 6">Isoform 1 and isoform 2 are expressed in the esophagus, tongue and trachea. Isoform 2 is also highly expressed in the adrenal cortex and heart.</text>
</comment>
<comment type="miscellaneous">
    <molecule>Isoform 2</molecule>
    <text evidence="8">Secreted and retained on the cell surface after secretion.</text>
</comment>
<comment type="similarity">
    <text evidence="4">Belongs to the peptidase S1 family.</text>
</comment>
<feature type="chain" id="PRO_0000027889" description="Transmembrane protease serine 11D non-catalytic chain">
    <location>
        <begin position="1"/>
        <end position="185"/>
    </location>
</feature>
<feature type="chain" id="PRO_0000027890" description="Transmembrane protease serine 11D catalytic chain">
    <location>
        <begin position="186"/>
        <end position="417"/>
    </location>
</feature>
<feature type="topological domain" description="Cytoplasmic" evidence="2">
    <location>
        <begin position="1"/>
        <end position="17"/>
    </location>
</feature>
<feature type="transmembrane region" description="Helical; Signal-anchor for type II membrane protein" evidence="2">
    <location>
        <begin position="18"/>
        <end position="38"/>
    </location>
</feature>
<feature type="topological domain" description="Extracellular" evidence="2">
    <location>
        <begin position="39"/>
        <end position="417"/>
    </location>
</feature>
<feature type="domain" description="SEA" evidence="3">
    <location>
        <begin position="46"/>
        <end position="162"/>
    </location>
</feature>
<feature type="domain" description="Peptidase S1" evidence="4">
    <location>
        <begin position="186"/>
        <end position="416"/>
    </location>
</feature>
<feature type="active site" description="Charge relay system" evidence="1">
    <location>
        <position position="226"/>
    </location>
</feature>
<feature type="active site" description="Charge relay system" evidence="1">
    <location>
        <position position="271"/>
    </location>
</feature>
<feature type="active site" description="Charge relay system" evidence="1">
    <location>
        <position position="367"/>
    </location>
</feature>
<feature type="disulfide bond" description="Interchain (between non-catalytic and catalytic chains)" evidence="4">
    <location>
        <begin position="172"/>
        <end position="291"/>
    </location>
</feature>
<feature type="disulfide bond" evidence="4">
    <location>
        <begin position="211"/>
        <end position="227"/>
    </location>
</feature>
<feature type="disulfide bond" evidence="4">
    <location>
        <begin position="336"/>
        <end position="352"/>
    </location>
</feature>
<feature type="disulfide bond" evidence="4">
    <location>
        <begin position="363"/>
        <end position="392"/>
    </location>
</feature>
<feature type="splice variant" id="VSP_014521" description="In isoform 2." evidence="7">
    <location>
        <begin position="1"/>
        <end position="138"/>
    </location>
</feature>
<feature type="splice variant" id="VSP_014522" description="In isoform 2." evidence="7">
    <original>LQRLSSSGNLEIAPSNGITS</original>
    <variation>MSFSFCFVDLLLVLSFLTLA</variation>
    <location>
        <begin position="139"/>
        <end position="158"/>
    </location>
</feature>
<feature type="sequence conflict" description="In Ref. 1; AAF13253." evidence="8" ref="1">
    <original>M</original>
    <variation>I</variation>
    <location>
        <position position="300"/>
    </location>
</feature>
<feature type="sequence conflict" description="In Ref. 1; AAF13253." evidence="8" ref="1">
    <original>V</original>
    <variation>A</variation>
    <location>
        <position position="307"/>
    </location>
</feature>
<evidence type="ECO:0000250" key="1"/>
<evidence type="ECO:0000255" key="2"/>
<evidence type="ECO:0000255" key="3">
    <source>
        <dbReference type="PROSITE-ProRule" id="PRU00188"/>
    </source>
</evidence>
<evidence type="ECO:0000255" key="4">
    <source>
        <dbReference type="PROSITE-ProRule" id="PRU00274"/>
    </source>
</evidence>
<evidence type="ECO:0000269" key="5">
    <source>
    </source>
</evidence>
<evidence type="ECO:0000269" key="6">
    <source>
    </source>
</evidence>
<evidence type="ECO:0000303" key="7">
    <source>
    </source>
</evidence>
<evidence type="ECO:0000305" key="8"/>
<sequence length="417" mass="46288">MYRPRSMVSPSRFFNPFMVALIVIITVGLLAMTAGLLIHFLAFDKRAYFYHSNFHILNVDYTEALNSPATHEYRTLSERIESMITDAFRESNLRSEFIRTHVVKLRKEGSGVVADVVMKFRSSKRNNKKAIKTRIQSVLQRLSSSGNLEIAPSNGITSLTDQDTENVLTQECGARPDLITLSEERIIGGTQAETGDWPWQVSLQLNNVHHCGGTLISNLWVLTAAHCFRSYSNPQQWTATFGVSTISPRLRVRVRAILAHAEYNSITRDNDIAVVQLDRPVTFTRNIHRVCLPAATQNIMPDSVAYVTGWGSLTYGGNTVTNLQQGEVRIVSSEVCNEPAGYGGSVLPGMLCAGVRSGAVDACQGDSGGPLVQEDTRRLWFVVGIVSWGYQCGLPNKPGVYTRVTAYRNWIRQQTGI</sequence>
<dbReference type="EC" id="3.4.21.-"/>
<dbReference type="EMBL" id="AF198087">
    <property type="protein sequence ID" value="AAF13253.1"/>
    <property type="molecule type" value="mRNA"/>
</dbReference>
<dbReference type="EMBL" id="AF453776">
    <property type="protein sequence ID" value="AAL50817.1"/>
    <property type="molecule type" value="mRNA"/>
</dbReference>
<dbReference type="RefSeq" id="NP_001028824.1">
    <property type="nucleotide sequence ID" value="NM_001033652.1"/>
</dbReference>
<dbReference type="RefSeq" id="NP_072152.1">
    <property type="nucleotide sequence ID" value="NM_022630.1"/>
</dbReference>
<dbReference type="SMR" id="Q8VHJ4"/>
<dbReference type="FunCoup" id="Q8VHJ4">
    <property type="interactions" value="4"/>
</dbReference>
<dbReference type="STRING" id="10116.ENSRNOP00000073795"/>
<dbReference type="MEROPS" id="S01.047"/>
<dbReference type="GlyGen" id="Q8VHJ4">
    <property type="glycosylation" value="1 site"/>
</dbReference>
<dbReference type="PaxDb" id="10116-ENSRNOP00000002748"/>
<dbReference type="GeneID" id="64565"/>
<dbReference type="KEGG" id="rno:64565"/>
<dbReference type="UCSC" id="RGD:620654">
    <molecule id="Q8VHJ4-1"/>
    <property type="organism name" value="rat"/>
</dbReference>
<dbReference type="AGR" id="RGD:620654"/>
<dbReference type="CTD" id="9407"/>
<dbReference type="RGD" id="620654">
    <property type="gene designation" value="Tmprss11d"/>
</dbReference>
<dbReference type="eggNOG" id="KOG3627">
    <property type="taxonomic scope" value="Eukaryota"/>
</dbReference>
<dbReference type="InParanoid" id="Q8VHJ4"/>
<dbReference type="PRO" id="PR:Q8VHJ4"/>
<dbReference type="Proteomes" id="UP000002494">
    <property type="component" value="Unplaced"/>
</dbReference>
<dbReference type="GO" id="GO:0009986">
    <property type="term" value="C:cell surface"/>
    <property type="evidence" value="ECO:0000314"/>
    <property type="project" value="RGD"/>
</dbReference>
<dbReference type="GO" id="GO:0005576">
    <property type="term" value="C:extracellular region"/>
    <property type="evidence" value="ECO:0007669"/>
    <property type="project" value="UniProtKB-SubCell"/>
</dbReference>
<dbReference type="GO" id="GO:0005886">
    <property type="term" value="C:plasma membrane"/>
    <property type="evidence" value="ECO:0007669"/>
    <property type="project" value="UniProtKB-SubCell"/>
</dbReference>
<dbReference type="GO" id="GO:0004252">
    <property type="term" value="F:serine-type endopeptidase activity"/>
    <property type="evidence" value="ECO:0007669"/>
    <property type="project" value="InterPro"/>
</dbReference>
<dbReference type="GO" id="GO:0008236">
    <property type="term" value="F:serine-type peptidase activity"/>
    <property type="evidence" value="ECO:0000314"/>
    <property type="project" value="RGD"/>
</dbReference>
<dbReference type="GO" id="GO:0006508">
    <property type="term" value="P:proteolysis"/>
    <property type="evidence" value="ECO:0000266"/>
    <property type="project" value="RGD"/>
</dbReference>
<dbReference type="GO" id="GO:0040008">
    <property type="term" value="P:regulation of growth"/>
    <property type="evidence" value="ECO:0000315"/>
    <property type="project" value="RGD"/>
</dbReference>
<dbReference type="CDD" id="cd00190">
    <property type="entry name" value="Tryp_SPc"/>
    <property type="match status" value="1"/>
</dbReference>
<dbReference type="FunFam" id="3.30.70.960:FF:000010">
    <property type="entry name" value="Transmembrane protease serine"/>
    <property type="match status" value="1"/>
</dbReference>
<dbReference type="FunFam" id="2.40.10.10:FF:000003">
    <property type="entry name" value="Transmembrane serine protease 3"/>
    <property type="match status" value="1"/>
</dbReference>
<dbReference type="Gene3D" id="3.30.70.960">
    <property type="entry name" value="SEA domain"/>
    <property type="match status" value="1"/>
</dbReference>
<dbReference type="Gene3D" id="2.40.10.10">
    <property type="entry name" value="Trypsin-like serine proteases"/>
    <property type="match status" value="2"/>
</dbReference>
<dbReference type="InterPro" id="IPR017329">
    <property type="entry name" value="Pept_S1A_HAT/DESC1"/>
</dbReference>
<dbReference type="InterPro" id="IPR009003">
    <property type="entry name" value="Peptidase_S1_PA"/>
</dbReference>
<dbReference type="InterPro" id="IPR043504">
    <property type="entry name" value="Peptidase_S1_PA_chymotrypsin"/>
</dbReference>
<dbReference type="InterPro" id="IPR001314">
    <property type="entry name" value="Peptidase_S1A"/>
</dbReference>
<dbReference type="InterPro" id="IPR000082">
    <property type="entry name" value="SEA_dom"/>
</dbReference>
<dbReference type="InterPro" id="IPR036364">
    <property type="entry name" value="SEA_dom_sf"/>
</dbReference>
<dbReference type="InterPro" id="IPR001254">
    <property type="entry name" value="Trypsin_dom"/>
</dbReference>
<dbReference type="InterPro" id="IPR018114">
    <property type="entry name" value="TRYPSIN_HIS"/>
</dbReference>
<dbReference type="InterPro" id="IPR033116">
    <property type="entry name" value="TRYPSIN_SER"/>
</dbReference>
<dbReference type="PANTHER" id="PTHR24252">
    <property type="entry name" value="ACROSIN-RELATED"/>
    <property type="match status" value="1"/>
</dbReference>
<dbReference type="PANTHER" id="PTHR24252:SF7">
    <property type="entry name" value="HYALIN"/>
    <property type="match status" value="1"/>
</dbReference>
<dbReference type="Pfam" id="PF01390">
    <property type="entry name" value="SEA"/>
    <property type="match status" value="1"/>
</dbReference>
<dbReference type="Pfam" id="PF00089">
    <property type="entry name" value="Trypsin"/>
    <property type="match status" value="1"/>
</dbReference>
<dbReference type="PIRSF" id="PIRSF037941">
    <property type="entry name" value="TMPRSS11ABCDE"/>
    <property type="match status" value="1"/>
</dbReference>
<dbReference type="PRINTS" id="PR00722">
    <property type="entry name" value="CHYMOTRYPSIN"/>
</dbReference>
<dbReference type="SMART" id="SM00020">
    <property type="entry name" value="Tryp_SPc"/>
    <property type="match status" value="1"/>
</dbReference>
<dbReference type="SUPFAM" id="SSF82671">
    <property type="entry name" value="SEA domain"/>
    <property type="match status" value="1"/>
</dbReference>
<dbReference type="SUPFAM" id="SSF50494">
    <property type="entry name" value="Trypsin-like serine proteases"/>
    <property type="match status" value="1"/>
</dbReference>
<dbReference type="PROSITE" id="PS50024">
    <property type="entry name" value="SEA"/>
    <property type="match status" value="1"/>
</dbReference>
<dbReference type="PROSITE" id="PS50240">
    <property type="entry name" value="TRYPSIN_DOM"/>
    <property type="match status" value="1"/>
</dbReference>
<dbReference type="PROSITE" id="PS00134">
    <property type="entry name" value="TRYPSIN_HIS"/>
    <property type="match status" value="1"/>
</dbReference>
<dbReference type="PROSITE" id="PS00135">
    <property type="entry name" value="TRYPSIN_SER"/>
    <property type="match status" value="1"/>
</dbReference>
<keyword id="KW-0025">Alternative splicing</keyword>
<keyword id="KW-1003">Cell membrane</keyword>
<keyword id="KW-1015">Disulfide bond</keyword>
<keyword id="KW-0378">Hydrolase</keyword>
<keyword id="KW-0472">Membrane</keyword>
<keyword id="KW-0645">Protease</keyword>
<keyword id="KW-1185">Reference proteome</keyword>
<keyword id="KW-0964">Secreted</keyword>
<keyword id="KW-0720">Serine protease</keyword>
<keyword id="KW-0735">Signal-anchor</keyword>
<keyword id="KW-0812">Transmembrane</keyword>
<keyword id="KW-1133">Transmembrane helix</keyword>
<keyword id="KW-0865">Zymogen</keyword>
<reference key="1">
    <citation type="journal article" date="2001" name="Cell">
        <title>Characterization of a serine protease that cleaves pro-gamma-melanotropin at the adrenal to stimulate growth.</title>
        <authorList>
            <person name="Bicknell A.B."/>
            <person name="Lomthaisong K."/>
            <person name="Woods R.J."/>
            <person name="Hutchinson E.G."/>
            <person name="Bennett H.P.J."/>
            <person name="Gladwell R.T."/>
            <person name="Lowry P.J."/>
        </authorList>
    </citation>
    <scope>NUCLEOTIDE SEQUENCE [MRNA] (ISOFORM 2)</scope>
    <scope>FUNCTION</scope>
    <scope>TISSUE SPECIFICITY</scope>
    <source>
        <strain>New England Deaconess Hospital</strain>
    </source>
</reference>
<reference key="2">
    <citation type="journal article" date="2004" name="Endocrinology">
        <title>The adrenal secretory serine protease AsP is a short secretory isoform of the transmembrane airway trypsin-like protease.</title>
        <authorList>
            <person name="Hansen I.A."/>
            <person name="Fassnacht M."/>
            <person name="Hahner S."/>
            <person name="Hammer F."/>
            <person name="Schammann M."/>
            <person name="Meyer S.R."/>
            <person name="Bicknell A.B."/>
            <person name="Allolio B."/>
        </authorList>
    </citation>
    <scope>NUCLEOTIDE SEQUENCE [MRNA] (ISOFORM 1)</scope>
    <scope>TISSUE SPECIFICITY</scope>
    <scope>ALTERNATIVE SPLICING</scope>
    <source>
        <strain>Wistar</strain>
        <tissue>Trachea</tissue>
    </source>
</reference>
<accession>Q8VHJ4</accession>
<accession>Q9QZ74</accession>